<feature type="chain" id="PRO_0000303714" description="Exodeoxyribonuclease 7 small subunit">
    <location>
        <begin position="1"/>
        <end position="84"/>
    </location>
</feature>
<accession>A4G1W7</accession>
<comment type="function">
    <text evidence="1">Bidirectionally degrades single-stranded DNA into large acid-insoluble oligonucleotides, which are then degraded further into small acid-soluble oligonucleotides.</text>
</comment>
<comment type="catalytic activity">
    <reaction evidence="1">
        <text>Exonucleolytic cleavage in either 5'- to 3'- or 3'- to 5'-direction to yield nucleoside 5'-phosphates.</text>
        <dbReference type="EC" id="3.1.11.6"/>
    </reaction>
</comment>
<comment type="subunit">
    <text evidence="1">Heterooligomer composed of large and small subunits.</text>
</comment>
<comment type="subcellular location">
    <subcellularLocation>
        <location evidence="1">Cytoplasm</location>
    </subcellularLocation>
</comment>
<comment type="similarity">
    <text evidence="1">Belongs to the XseB family.</text>
</comment>
<evidence type="ECO:0000255" key="1">
    <source>
        <dbReference type="HAMAP-Rule" id="MF_00337"/>
    </source>
</evidence>
<dbReference type="EC" id="3.1.11.6" evidence="1"/>
<dbReference type="EMBL" id="CU207211">
    <property type="protein sequence ID" value="CAL60504.1"/>
    <property type="molecule type" value="Genomic_DNA"/>
</dbReference>
<dbReference type="SMR" id="A4G1W7"/>
<dbReference type="STRING" id="204773.HEAR0277"/>
<dbReference type="KEGG" id="har:HEAR0277"/>
<dbReference type="eggNOG" id="COG1722">
    <property type="taxonomic scope" value="Bacteria"/>
</dbReference>
<dbReference type="HOGENOM" id="CLU_145918_2_0_4"/>
<dbReference type="OrthoDB" id="287668at2"/>
<dbReference type="Proteomes" id="UP000006697">
    <property type="component" value="Chromosome"/>
</dbReference>
<dbReference type="GO" id="GO:0005829">
    <property type="term" value="C:cytosol"/>
    <property type="evidence" value="ECO:0007669"/>
    <property type="project" value="TreeGrafter"/>
</dbReference>
<dbReference type="GO" id="GO:0009318">
    <property type="term" value="C:exodeoxyribonuclease VII complex"/>
    <property type="evidence" value="ECO:0007669"/>
    <property type="project" value="InterPro"/>
</dbReference>
<dbReference type="GO" id="GO:0008855">
    <property type="term" value="F:exodeoxyribonuclease VII activity"/>
    <property type="evidence" value="ECO:0007669"/>
    <property type="project" value="UniProtKB-UniRule"/>
</dbReference>
<dbReference type="GO" id="GO:0006308">
    <property type="term" value="P:DNA catabolic process"/>
    <property type="evidence" value="ECO:0007669"/>
    <property type="project" value="UniProtKB-UniRule"/>
</dbReference>
<dbReference type="Gene3D" id="1.10.287.1040">
    <property type="entry name" value="Exonuclease VII, small subunit"/>
    <property type="match status" value="1"/>
</dbReference>
<dbReference type="HAMAP" id="MF_00337">
    <property type="entry name" value="Exonuc_7_S"/>
    <property type="match status" value="1"/>
</dbReference>
<dbReference type="InterPro" id="IPR003761">
    <property type="entry name" value="Exonuc_VII_S"/>
</dbReference>
<dbReference type="InterPro" id="IPR037004">
    <property type="entry name" value="Exonuc_VII_ssu_sf"/>
</dbReference>
<dbReference type="NCBIfam" id="NF002141">
    <property type="entry name" value="PRK00977.1-5"/>
    <property type="match status" value="1"/>
</dbReference>
<dbReference type="NCBIfam" id="TIGR01280">
    <property type="entry name" value="xseB"/>
    <property type="match status" value="1"/>
</dbReference>
<dbReference type="PANTHER" id="PTHR34137">
    <property type="entry name" value="EXODEOXYRIBONUCLEASE 7 SMALL SUBUNIT"/>
    <property type="match status" value="1"/>
</dbReference>
<dbReference type="PANTHER" id="PTHR34137:SF1">
    <property type="entry name" value="EXODEOXYRIBONUCLEASE 7 SMALL SUBUNIT"/>
    <property type="match status" value="1"/>
</dbReference>
<dbReference type="Pfam" id="PF02609">
    <property type="entry name" value="Exonuc_VII_S"/>
    <property type="match status" value="1"/>
</dbReference>
<dbReference type="PIRSF" id="PIRSF006488">
    <property type="entry name" value="Exonuc_VII_S"/>
    <property type="match status" value="1"/>
</dbReference>
<dbReference type="SUPFAM" id="SSF116842">
    <property type="entry name" value="XseB-like"/>
    <property type="match status" value="1"/>
</dbReference>
<organism>
    <name type="scientific">Herminiimonas arsenicoxydans</name>
    <dbReference type="NCBI Taxonomy" id="204773"/>
    <lineage>
        <taxon>Bacteria</taxon>
        <taxon>Pseudomonadati</taxon>
        <taxon>Pseudomonadota</taxon>
        <taxon>Betaproteobacteria</taxon>
        <taxon>Burkholderiales</taxon>
        <taxon>Oxalobacteraceae</taxon>
        <taxon>Herminiimonas</taxon>
    </lineage>
</organism>
<protein>
    <recommendedName>
        <fullName evidence="1">Exodeoxyribonuclease 7 small subunit</fullName>
        <ecNumber evidence="1">3.1.11.6</ecNumber>
    </recommendedName>
    <alternativeName>
        <fullName evidence="1">Exodeoxyribonuclease VII small subunit</fullName>
        <shortName evidence="1">Exonuclease VII small subunit</shortName>
    </alternativeName>
</protein>
<sequence length="84" mass="9122">MSKKSTSAALPSSFEEAMAELEQLVARMEAGELPLEASVAAYKRGSELVKYCAAQLEKVDSQVKVLEGDMLKPFNADRAIEADE</sequence>
<reference key="1">
    <citation type="journal article" date="2007" name="PLoS Genet.">
        <title>A tale of two oxidation states: bacterial colonization of arsenic-rich environments.</title>
        <authorList>
            <person name="Muller D."/>
            <person name="Medigue C."/>
            <person name="Koechler S."/>
            <person name="Barbe V."/>
            <person name="Barakat M."/>
            <person name="Talla E."/>
            <person name="Bonnefoy V."/>
            <person name="Krin E."/>
            <person name="Arsene-Ploetze F."/>
            <person name="Carapito C."/>
            <person name="Chandler M."/>
            <person name="Cournoyer B."/>
            <person name="Cruveiller S."/>
            <person name="Dossat C."/>
            <person name="Duval S."/>
            <person name="Heymann M."/>
            <person name="Leize E."/>
            <person name="Lieutaud A."/>
            <person name="Lievremont D."/>
            <person name="Makita Y."/>
            <person name="Mangenot S."/>
            <person name="Nitschke W."/>
            <person name="Ortet P."/>
            <person name="Perdrial N."/>
            <person name="Schoepp B."/>
            <person name="Siguier P."/>
            <person name="Simeonova D.D."/>
            <person name="Rouy Z."/>
            <person name="Segurens B."/>
            <person name="Turlin E."/>
            <person name="Vallenet D."/>
            <person name="van Dorsselaer A."/>
            <person name="Weiss S."/>
            <person name="Weissenbach J."/>
            <person name="Lett M.-C."/>
            <person name="Danchin A."/>
            <person name="Bertin P.N."/>
        </authorList>
    </citation>
    <scope>NUCLEOTIDE SEQUENCE [LARGE SCALE GENOMIC DNA]</scope>
    <source>
        <strain>ULPAs1</strain>
    </source>
</reference>
<proteinExistence type="inferred from homology"/>
<name>EX7S_HERAR</name>
<keyword id="KW-0963">Cytoplasm</keyword>
<keyword id="KW-0269">Exonuclease</keyword>
<keyword id="KW-0378">Hydrolase</keyword>
<keyword id="KW-0540">Nuclease</keyword>
<keyword id="KW-1185">Reference proteome</keyword>
<gene>
    <name evidence="1" type="primary">xseB</name>
    <name type="ordered locus">HEAR0277</name>
</gene>